<accession>B1HSV6</accession>
<keyword id="KW-0687">Ribonucleoprotein</keyword>
<keyword id="KW-0689">Ribosomal protein</keyword>
<keyword id="KW-0694">RNA-binding</keyword>
<keyword id="KW-0699">rRNA-binding</keyword>
<comment type="function">
    <text evidence="1">This is one of the proteins that binds to the 5S RNA in the ribosome where it forms part of the central protuberance.</text>
</comment>
<comment type="subunit">
    <text evidence="1">Part of the 50S ribosomal subunit; part of the 5S rRNA/L5/L18/L25 subcomplex. Contacts the 5S rRNA. Binds to the 5S rRNA independently of L5 and L18.</text>
</comment>
<comment type="similarity">
    <text evidence="1">Belongs to the bacterial ribosomal protein bL25 family. CTC subfamily.</text>
</comment>
<dbReference type="EMBL" id="CP000817">
    <property type="protein sequence ID" value="ACA37710.1"/>
    <property type="molecule type" value="Genomic_DNA"/>
</dbReference>
<dbReference type="RefSeq" id="WP_012291883.1">
    <property type="nucleotide sequence ID" value="NC_010382.1"/>
</dbReference>
<dbReference type="SMR" id="B1HSV6"/>
<dbReference type="EnsemblBacteria" id="ACA37710">
    <property type="protein sequence ID" value="ACA37710"/>
    <property type="gene ID" value="Bsph_0072"/>
</dbReference>
<dbReference type="KEGG" id="lsp:Bsph_0072"/>
<dbReference type="HOGENOM" id="CLU_075939_2_0_9"/>
<dbReference type="Proteomes" id="UP000002164">
    <property type="component" value="Chromosome"/>
</dbReference>
<dbReference type="GO" id="GO:0022625">
    <property type="term" value="C:cytosolic large ribosomal subunit"/>
    <property type="evidence" value="ECO:0007669"/>
    <property type="project" value="TreeGrafter"/>
</dbReference>
<dbReference type="GO" id="GO:0008097">
    <property type="term" value="F:5S rRNA binding"/>
    <property type="evidence" value="ECO:0007669"/>
    <property type="project" value="InterPro"/>
</dbReference>
<dbReference type="GO" id="GO:0003735">
    <property type="term" value="F:structural constituent of ribosome"/>
    <property type="evidence" value="ECO:0007669"/>
    <property type="project" value="InterPro"/>
</dbReference>
<dbReference type="GO" id="GO:0006412">
    <property type="term" value="P:translation"/>
    <property type="evidence" value="ECO:0007669"/>
    <property type="project" value="UniProtKB-UniRule"/>
</dbReference>
<dbReference type="CDD" id="cd00495">
    <property type="entry name" value="Ribosomal_L25_TL5_CTC"/>
    <property type="match status" value="1"/>
</dbReference>
<dbReference type="Gene3D" id="2.170.120.20">
    <property type="entry name" value="Ribosomal protein L25, beta domain"/>
    <property type="match status" value="1"/>
</dbReference>
<dbReference type="Gene3D" id="2.40.240.10">
    <property type="entry name" value="Ribosomal Protein L25, Chain P"/>
    <property type="match status" value="1"/>
</dbReference>
<dbReference type="HAMAP" id="MF_01334">
    <property type="entry name" value="Ribosomal_bL25_CTC"/>
    <property type="match status" value="1"/>
</dbReference>
<dbReference type="InterPro" id="IPR020056">
    <property type="entry name" value="Rbsml_bL25/Gln-tRNA_synth_N"/>
</dbReference>
<dbReference type="InterPro" id="IPR011035">
    <property type="entry name" value="Ribosomal_bL25/Gln-tRNA_synth"/>
</dbReference>
<dbReference type="InterPro" id="IPR020057">
    <property type="entry name" value="Ribosomal_bL25_b-dom"/>
</dbReference>
<dbReference type="InterPro" id="IPR037121">
    <property type="entry name" value="Ribosomal_bL25_C"/>
</dbReference>
<dbReference type="InterPro" id="IPR001021">
    <property type="entry name" value="Ribosomal_bL25_long"/>
</dbReference>
<dbReference type="InterPro" id="IPR029751">
    <property type="entry name" value="Ribosomal_L25_dom"/>
</dbReference>
<dbReference type="InterPro" id="IPR020930">
    <property type="entry name" value="Ribosomal_uL5_bac-type"/>
</dbReference>
<dbReference type="NCBIfam" id="TIGR00731">
    <property type="entry name" value="bL25_bact_ctc"/>
    <property type="match status" value="1"/>
</dbReference>
<dbReference type="NCBIfam" id="NF004133">
    <property type="entry name" value="PRK05618.2-4"/>
    <property type="match status" value="1"/>
</dbReference>
<dbReference type="PANTHER" id="PTHR33284">
    <property type="entry name" value="RIBOSOMAL PROTEIN L25/GLN-TRNA SYNTHETASE, ANTI-CODON-BINDING DOMAIN-CONTAINING PROTEIN"/>
    <property type="match status" value="1"/>
</dbReference>
<dbReference type="PANTHER" id="PTHR33284:SF1">
    <property type="entry name" value="RIBOSOMAL PROTEIN L25_GLN-TRNA SYNTHETASE, ANTI-CODON-BINDING DOMAIN-CONTAINING PROTEIN"/>
    <property type="match status" value="1"/>
</dbReference>
<dbReference type="Pfam" id="PF01386">
    <property type="entry name" value="Ribosomal_L25p"/>
    <property type="match status" value="1"/>
</dbReference>
<dbReference type="Pfam" id="PF14693">
    <property type="entry name" value="Ribosomal_TL5_C"/>
    <property type="match status" value="1"/>
</dbReference>
<dbReference type="SUPFAM" id="SSF50715">
    <property type="entry name" value="Ribosomal protein L25-like"/>
    <property type="match status" value="1"/>
</dbReference>
<gene>
    <name evidence="1" type="primary">rplY</name>
    <name evidence="1" type="synonym">ctc</name>
    <name type="ordered locus">Bsph_0072</name>
</gene>
<evidence type="ECO:0000255" key="1">
    <source>
        <dbReference type="HAMAP-Rule" id="MF_01334"/>
    </source>
</evidence>
<evidence type="ECO:0000305" key="2"/>
<reference key="1">
    <citation type="journal article" date="2008" name="J. Bacteriol.">
        <title>Complete genome sequence of the mosquitocidal bacterium Bacillus sphaericus C3-41 and comparison with those of closely related Bacillus species.</title>
        <authorList>
            <person name="Hu X."/>
            <person name="Fan W."/>
            <person name="Han B."/>
            <person name="Liu H."/>
            <person name="Zheng D."/>
            <person name="Li Q."/>
            <person name="Dong W."/>
            <person name="Yan J."/>
            <person name="Gao M."/>
            <person name="Berry C."/>
            <person name="Yuan Z."/>
        </authorList>
    </citation>
    <scope>NUCLEOTIDE SEQUENCE [LARGE SCALE GENOMIC DNA]</scope>
    <source>
        <strain>C3-41</strain>
    </source>
</reference>
<feature type="chain" id="PRO_1000142531" description="Large ribosomal subunit protein bL25">
    <location>
        <begin position="1"/>
        <end position="198"/>
    </location>
</feature>
<organism>
    <name type="scientific">Lysinibacillus sphaericus (strain C3-41)</name>
    <dbReference type="NCBI Taxonomy" id="444177"/>
    <lineage>
        <taxon>Bacteria</taxon>
        <taxon>Bacillati</taxon>
        <taxon>Bacillota</taxon>
        <taxon>Bacilli</taxon>
        <taxon>Bacillales</taxon>
        <taxon>Bacillaceae</taxon>
        <taxon>Lysinibacillus</taxon>
    </lineage>
</organism>
<sequence>MSTVLSVTKRETGHRSTLTQLRKGGAIPAVIYGYKLDSTPISISAKEFKKSIQKNGQNSVFSLDLEGKKVNVVVSEVQQCSLKDEVNHVDFLAINMAEELEVDVPIKLIGQSVGVSEGGILMQPNLELKVKVKPAELPDSIEVDISSLKVGESLTVAEIRHQTPVEIISEDDYLLVTIVAPVSAEQEEVSASVEEEQV</sequence>
<proteinExistence type="inferred from homology"/>
<protein>
    <recommendedName>
        <fullName evidence="1">Large ribosomal subunit protein bL25</fullName>
    </recommendedName>
    <alternativeName>
        <fullName evidence="2">50S ribosomal protein L25</fullName>
    </alternativeName>
    <alternativeName>
        <fullName evidence="1">General stress protein CTC</fullName>
    </alternativeName>
</protein>
<name>RL25_LYSSC</name>